<dbReference type="EC" id="2.3.2.27" evidence="5"/>
<dbReference type="EMBL" id="AY157968">
    <property type="protein sequence ID" value="AAN60073.1"/>
    <property type="molecule type" value="mRNA"/>
</dbReference>
<dbReference type="EMBL" id="BC079044">
    <property type="protein sequence ID" value="AAH79044.1"/>
    <property type="molecule type" value="mRNA"/>
</dbReference>
<dbReference type="RefSeq" id="NP_001004075.1">
    <property type="nucleotide sequence ID" value="NM_001004075.1"/>
</dbReference>
<dbReference type="SMR" id="Q6AYH3"/>
<dbReference type="FunCoup" id="Q6AYH3">
    <property type="interactions" value="4529"/>
</dbReference>
<dbReference type="STRING" id="10116.ENSRNOP00000001799"/>
<dbReference type="PhosphoSitePlus" id="Q6AYH3"/>
<dbReference type="jPOST" id="Q6AYH3"/>
<dbReference type="PaxDb" id="10116-ENSRNOP00000001799"/>
<dbReference type="Ensembl" id="ENSRNOT00000001799.6">
    <property type="protein sequence ID" value="ENSRNOP00000001799.4"/>
    <property type="gene ID" value="ENSRNOG00000001331.6"/>
</dbReference>
<dbReference type="GeneID" id="282845"/>
<dbReference type="KEGG" id="rno:282845"/>
<dbReference type="UCSC" id="RGD:628636">
    <property type="organism name" value="rat"/>
</dbReference>
<dbReference type="AGR" id="RGD:628636"/>
<dbReference type="CTD" id="80196"/>
<dbReference type="RGD" id="628636">
    <property type="gene designation" value="Rnf34"/>
</dbReference>
<dbReference type="eggNOG" id="KOG4275">
    <property type="taxonomic scope" value="Eukaryota"/>
</dbReference>
<dbReference type="GeneTree" id="ENSGT00390000012719"/>
<dbReference type="HOGENOM" id="CLU_041431_1_0_1"/>
<dbReference type="InParanoid" id="Q6AYH3"/>
<dbReference type="PhylomeDB" id="Q6AYH3"/>
<dbReference type="TreeFam" id="TF325195"/>
<dbReference type="Reactome" id="R-RNO-6804757">
    <property type="pathway name" value="Regulation of TP53 Degradation"/>
</dbReference>
<dbReference type="Reactome" id="R-RNO-983168">
    <property type="pathway name" value="Antigen processing: Ubiquitination &amp; Proteasome degradation"/>
</dbReference>
<dbReference type="UniPathway" id="UPA00143"/>
<dbReference type="PRO" id="PR:Q6AYH3"/>
<dbReference type="Proteomes" id="UP000002494">
    <property type="component" value="Chromosome 12"/>
</dbReference>
<dbReference type="Bgee" id="ENSRNOG00000001331">
    <property type="expression patterns" value="Expressed in cerebellum and 20 other cell types or tissues"/>
</dbReference>
<dbReference type="GO" id="GO:0005737">
    <property type="term" value="C:cytoplasm"/>
    <property type="evidence" value="ECO:0000250"/>
    <property type="project" value="UniProtKB"/>
</dbReference>
<dbReference type="GO" id="GO:0005829">
    <property type="term" value="C:cytosol"/>
    <property type="evidence" value="ECO:0007669"/>
    <property type="project" value="UniProtKB-SubCell"/>
</dbReference>
<dbReference type="GO" id="GO:0012505">
    <property type="term" value="C:endomembrane system"/>
    <property type="evidence" value="ECO:0007669"/>
    <property type="project" value="UniProtKB-SubCell"/>
</dbReference>
<dbReference type="GO" id="GO:0098982">
    <property type="term" value="C:GABA-ergic synapse"/>
    <property type="evidence" value="ECO:0000314"/>
    <property type="project" value="SynGO"/>
</dbReference>
<dbReference type="GO" id="GO:0016607">
    <property type="term" value="C:nuclear speck"/>
    <property type="evidence" value="ECO:0007669"/>
    <property type="project" value="UniProtKB-SubCell"/>
</dbReference>
<dbReference type="GO" id="GO:0005634">
    <property type="term" value="C:nucleus"/>
    <property type="evidence" value="ECO:0000250"/>
    <property type="project" value="UniProtKB"/>
</dbReference>
<dbReference type="GO" id="GO:0005886">
    <property type="term" value="C:plasma membrane"/>
    <property type="evidence" value="ECO:0000250"/>
    <property type="project" value="UniProtKB"/>
</dbReference>
<dbReference type="GO" id="GO:0099572">
    <property type="term" value="C:postsynaptic specialization"/>
    <property type="evidence" value="ECO:0000314"/>
    <property type="project" value="SynGO"/>
</dbReference>
<dbReference type="GO" id="GO:0098793">
    <property type="term" value="C:presynapse"/>
    <property type="evidence" value="ECO:0000314"/>
    <property type="project" value="SynGO"/>
</dbReference>
<dbReference type="GO" id="GO:0002039">
    <property type="term" value="F:p53 binding"/>
    <property type="evidence" value="ECO:0000266"/>
    <property type="project" value="RGD"/>
</dbReference>
<dbReference type="GO" id="GO:1901981">
    <property type="term" value="F:phosphatidylinositol phosphate binding"/>
    <property type="evidence" value="ECO:0000250"/>
    <property type="project" value="UniProtKB"/>
</dbReference>
<dbReference type="GO" id="GO:0061630">
    <property type="term" value="F:ubiquitin protein ligase activity"/>
    <property type="evidence" value="ECO:0000314"/>
    <property type="project" value="CACAO"/>
</dbReference>
<dbReference type="GO" id="GO:0031625">
    <property type="term" value="F:ubiquitin protein ligase binding"/>
    <property type="evidence" value="ECO:0000266"/>
    <property type="project" value="RGD"/>
</dbReference>
<dbReference type="GO" id="GO:0004842">
    <property type="term" value="F:ubiquitin-protein transferase activity"/>
    <property type="evidence" value="ECO:0000314"/>
    <property type="project" value="RGD"/>
</dbReference>
<dbReference type="GO" id="GO:0008270">
    <property type="term" value="F:zinc ion binding"/>
    <property type="evidence" value="ECO:0007669"/>
    <property type="project" value="UniProtKB-KW"/>
</dbReference>
<dbReference type="GO" id="GO:0006915">
    <property type="term" value="P:apoptotic process"/>
    <property type="evidence" value="ECO:0007669"/>
    <property type="project" value="UniProtKB-KW"/>
</dbReference>
<dbReference type="GO" id="GO:0070417">
    <property type="term" value="P:cellular response to cold"/>
    <property type="evidence" value="ECO:0000266"/>
    <property type="project" value="RGD"/>
</dbReference>
<dbReference type="GO" id="GO:1902042">
    <property type="term" value="P:negative regulation of extrinsic apoptotic signaling pathway via death domain receptors"/>
    <property type="evidence" value="ECO:0000250"/>
    <property type="project" value="UniProtKB"/>
</dbReference>
<dbReference type="GO" id="GO:1901797">
    <property type="term" value="P:negative regulation of signal transduction by p53 class mediator"/>
    <property type="evidence" value="ECO:0000250"/>
    <property type="project" value="UniProtKB"/>
</dbReference>
<dbReference type="GO" id="GO:0035872">
    <property type="term" value="P:nucleotide-binding domain, leucine rich repeat containing receptor signaling pathway"/>
    <property type="evidence" value="ECO:0000250"/>
    <property type="project" value="UniProtKB"/>
</dbReference>
<dbReference type="GO" id="GO:0043161">
    <property type="term" value="P:proteasome-mediated ubiquitin-dependent protein catabolic process"/>
    <property type="evidence" value="ECO:0000250"/>
    <property type="project" value="UniProtKB"/>
</dbReference>
<dbReference type="GO" id="GO:0070936">
    <property type="term" value="P:protein K48-linked ubiquitination"/>
    <property type="evidence" value="ECO:0000250"/>
    <property type="project" value="UniProtKB"/>
</dbReference>
<dbReference type="GO" id="GO:0016567">
    <property type="term" value="P:protein ubiquitination"/>
    <property type="evidence" value="ECO:0000250"/>
    <property type="project" value="UniProtKB"/>
</dbReference>
<dbReference type="GO" id="GO:2000374">
    <property type="term" value="P:regulation of oxygen metabolic process"/>
    <property type="evidence" value="ECO:0000250"/>
    <property type="project" value="UniProtKB"/>
</dbReference>
<dbReference type="GO" id="GO:0099149">
    <property type="term" value="P:regulation of postsynaptic neurotransmitter receptor internalization"/>
    <property type="evidence" value="ECO:0000314"/>
    <property type="project" value="SynGO"/>
</dbReference>
<dbReference type="GO" id="GO:0006511">
    <property type="term" value="P:ubiquitin-dependent protein catabolic process"/>
    <property type="evidence" value="ECO:0000250"/>
    <property type="project" value="UniProtKB"/>
</dbReference>
<dbReference type="CDD" id="cd15769">
    <property type="entry name" value="FYVE_CARP1"/>
    <property type="match status" value="1"/>
</dbReference>
<dbReference type="CDD" id="cd16706">
    <property type="entry name" value="RING-HC_CARP1"/>
    <property type="match status" value="1"/>
</dbReference>
<dbReference type="FunFam" id="1.10.720.140:FF:000001">
    <property type="entry name" value="E3 ubiquitin-protein ligase RNF34 isoform X1"/>
    <property type="match status" value="1"/>
</dbReference>
<dbReference type="FunFam" id="3.30.40.10:FF:000110">
    <property type="entry name" value="E3 ubiquitin-protein ligase RNF34 isoform X1"/>
    <property type="match status" value="1"/>
</dbReference>
<dbReference type="Gene3D" id="1.10.720.140">
    <property type="match status" value="1"/>
</dbReference>
<dbReference type="Gene3D" id="1.10.720.30">
    <property type="entry name" value="SAP domain"/>
    <property type="match status" value="1"/>
</dbReference>
<dbReference type="Gene3D" id="3.30.40.10">
    <property type="entry name" value="Zinc/RING finger domain, C3HC4 (zinc finger)"/>
    <property type="match status" value="1"/>
</dbReference>
<dbReference type="InterPro" id="IPR049320">
    <property type="entry name" value="CARP1_2_FYVE"/>
</dbReference>
<dbReference type="InterPro" id="IPR049323">
    <property type="entry name" value="CARP1_FYVE"/>
</dbReference>
<dbReference type="InterPro" id="IPR051728">
    <property type="entry name" value="RING-FYVE_E3_ubiquitin-ligase"/>
</dbReference>
<dbReference type="InterPro" id="IPR055111">
    <property type="entry name" value="RNF34L-like_HeH"/>
</dbReference>
<dbReference type="InterPro" id="IPR036361">
    <property type="entry name" value="SAP_dom_sf"/>
</dbReference>
<dbReference type="InterPro" id="IPR011011">
    <property type="entry name" value="Znf_FYVE_PHD"/>
</dbReference>
<dbReference type="InterPro" id="IPR001841">
    <property type="entry name" value="Znf_RING"/>
</dbReference>
<dbReference type="InterPro" id="IPR013083">
    <property type="entry name" value="Znf_RING/FYVE/PHD"/>
</dbReference>
<dbReference type="PANTHER" id="PTHR14879">
    <property type="entry name" value="CASPASE REGULATOR, RING FINGER DOMAIN-CONTAINING"/>
    <property type="match status" value="1"/>
</dbReference>
<dbReference type="PANTHER" id="PTHR14879:SF3">
    <property type="entry name" value="E3 UBIQUITIN-PROTEIN LIGASE RNF34"/>
    <property type="match status" value="1"/>
</dbReference>
<dbReference type="Pfam" id="PF21272">
    <property type="entry name" value="FYVE_CARP1-2"/>
    <property type="match status" value="1"/>
</dbReference>
<dbReference type="Pfam" id="PF22968">
    <property type="entry name" value="RNF34L-like_3rd"/>
    <property type="match status" value="1"/>
</dbReference>
<dbReference type="Pfam" id="PF23632">
    <property type="entry name" value="SAP_RNF34_RFFL"/>
    <property type="match status" value="1"/>
</dbReference>
<dbReference type="Pfam" id="PF13920">
    <property type="entry name" value="zf-C3HC4_3"/>
    <property type="match status" value="1"/>
</dbReference>
<dbReference type="SMART" id="SM00184">
    <property type="entry name" value="RING"/>
    <property type="match status" value="1"/>
</dbReference>
<dbReference type="SUPFAM" id="SSF57903">
    <property type="entry name" value="FYVE/PHD zinc finger"/>
    <property type="match status" value="1"/>
</dbReference>
<dbReference type="SUPFAM" id="SSF57850">
    <property type="entry name" value="RING/U-box"/>
    <property type="match status" value="1"/>
</dbReference>
<dbReference type="SUPFAM" id="SSF68906">
    <property type="entry name" value="SAP domain"/>
    <property type="match status" value="1"/>
</dbReference>
<dbReference type="PROSITE" id="PS50089">
    <property type="entry name" value="ZF_RING_2"/>
    <property type="match status" value="1"/>
</dbReference>
<keyword id="KW-0053">Apoptosis</keyword>
<keyword id="KW-1003">Cell membrane</keyword>
<keyword id="KW-0963">Cytoplasm</keyword>
<keyword id="KW-0472">Membrane</keyword>
<keyword id="KW-0479">Metal-binding</keyword>
<keyword id="KW-0539">Nucleus</keyword>
<keyword id="KW-0597">Phosphoprotein</keyword>
<keyword id="KW-1185">Reference proteome</keyword>
<keyword id="KW-0677">Repeat</keyword>
<keyword id="KW-0808">Transferase</keyword>
<keyword id="KW-0832">Ubl conjugation</keyword>
<keyword id="KW-0833">Ubl conjugation pathway</keyword>
<keyword id="KW-0862">Zinc</keyword>
<keyword id="KW-0863">Zinc-finger</keyword>
<comment type="function">
    <text evidence="1 5">E3 ubiquitin-protein ligase that regulates several biological processes through the ubiquitin-mediated proteasomal degradation of various target proteins. Ubiquitinates the caspases CASP8 and CASP10, promoting their proteasomal degradation, to negatively regulate cell death downstream of death domain receptors in the extrinsic pathway of apoptosis. May mediate 'Lys-48'-linked polyubiquitination of RIPK1 and its subsequent proteasomal degradation thereby indirectly regulating the tumor necrosis factor-mediated signaling pathway. Negatively regulates p53/TP53 through its direct ubiquitination and targeting to proteasomal degradation. Indirectly, may also negatively regulate p53/TP53 through ubiquitination and degradation of SFN. Mediates PPARGC1A proteasomal degradation probably through ubiquitination thereby indirectly regulating the metabolism of brown fat cells. Possibly involved in innate immunity, through 'Lys-48'-linked polyubiquitination of NOD1 and its subsequent proteasomal degradation.</text>
</comment>
<comment type="catalytic activity">
    <reaction evidence="5">
        <text>S-ubiquitinyl-[E2 ubiquitin-conjugating enzyme]-L-cysteine + [acceptor protein]-L-lysine = [E2 ubiquitin-conjugating enzyme]-L-cysteine + N(6)-ubiquitinyl-[acceptor protein]-L-lysine.</text>
        <dbReference type="EC" id="2.3.2.27"/>
    </reaction>
</comment>
<comment type="pathway">
    <text evidence="1">Protein modification; protein ubiquitination.</text>
</comment>
<comment type="subunit">
    <text evidence="1">Interacts with CASP8 and CASP10. Interacts with p53/TP53; involved in p53/TP53 ubiquitination. Interacts (via RING-type zinc finger) with MDM2; the interaction stabilizes MDM2. Interacts (via RING-type zinc finger) with PPARGC1A. Interacts with NOD1.</text>
</comment>
<comment type="subcellular location">
    <subcellularLocation>
        <location evidence="1">Cell membrane</location>
        <topology evidence="1">Peripheral membrane protein</topology>
    </subcellularLocation>
    <subcellularLocation>
        <location evidence="5">Endomembrane system</location>
        <topology evidence="7">Peripheral membrane protein</topology>
    </subcellularLocation>
    <subcellularLocation>
        <location evidence="1">Nucleus</location>
    </subcellularLocation>
    <subcellularLocation>
        <location evidence="1">Nucleus speckle</location>
    </subcellularLocation>
    <subcellularLocation>
        <location evidence="1">Cytoplasm</location>
        <location evidence="1">Cytosol</location>
    </subcellularLocation>
</comment>
<comment type="tissue specificity">
    <text evidence="5">Ubiquitous. Detected in brain, cerebellum, midbrain, hippocampus, striatum, heart, lung, kidney, muscle, spleen and testis.</text>
</comment>
<comment type="domain">
    <text evidence="1">The RING-type zinc finger is required for the ubiquitination of target proteins.</text>
</comment>
<comment type="domain">
    <text evidence="1">The FYVE-type zinc finger domain is required for localization and may confer affinity for cellular compartments enriched in phosphatidylinositol 5-phosphate and phosphatidylinositol 3-phosphate phospholipids.</text>
</comment>
<comment type="PTM">
    <text evidence="1">Proteolytically cleaved by caspases upon induction of apoptosis by TNF.</text>
</comment>
<comment type="PTM">
    <text evidence="5">Autoubiquitinated (in vitro).</text>
</comment>
<evidence type="ECO:0000250" key="1">
    <source>
        <dbReference type="UniProtKB" id="Q969K3"/>
    </source>
</evidence>
<evidence type="ECO:0000250" key="2">
    <source>
        <dbReference type="UniProtKB" id="Q99KR6"/>
    </source>
</evidence>
<evidence type="ECO:0000255" key="3">
    <source>
        <dbReference type="PROSITE-ProRule" id="PRU00175"/>
    </source>
</evidence>
<evidence type="ECO:0000256" key="4">
    <source>
        <dbReference type="SAM" id="MobiDB-lite"/>
    </source>
</evidence>
<evidence type="ECO:0000269" key="5">
    <source>
    </source>
</evidence>
<evidence type="ECO:0000303" key="6">
    <source>
    </source>
</evidence>
<evidence type="ECO:0000305" key="7"/>
<evidence type="ECO:0000312" key="8">
    <source>
        <dbReference type="RGD" id="628636"/>
    </source>
</evidence>
<organism>
    <name type="scientific">Rattus norvegicus</name>
    <name type="common">Rat</name>
    <dbReference type="NCBI Taxonomy" id="10116"/>
    <lineage>
        <taxon>Eukaryota</taxon>
        <taxon>Metazoa</taxon>
        <taxon>Chordata</taxon>
        <taxon>Craniata</taxon>
        <taxon>Vertebrata</taxon>
        <taxon>Euteleostomi</taxon>
        <taxon>Mammalia</taxon>
        <taxon>Eutheria</taxon>
        <taxon>Euarchontoglires</taxon>
        <taxon>Glires</taxon>
        <taxon>Rodentia</taxon>
        <taxon>Myomorpha</taxon>
        <taxon>Muroidea</taxon>
        <taxon>Muridae</taxon>
        <taxon>Murinae</taxon>
        <taxon>Rattus</taxon>
    </lineage>
</organism>
<sequence length="381" mass="42681">MKAGATSMWASCCGLLNEVMGTGAVRGQQAGFPGSTGPFRFTPSSDFPTYPPAATEGPNIVCKACGLSFSVFRKKHVCCDCKKDFCSLCSVSQENLRRCSTCHLLQETAFQRPQLMRLKVKDLRQYLLLRNVPTDTCREKEDLVDLVLCHRGLGSGDGLDSRSLSSSRSQTSSFFTQSYFSNYTPPSATVSSFQGELMDREGTFRSEVLTQVQSELASANTDDEDGEEDDDDDDDDDDEDDDEQEENLEEQNPGLSKKKARASLSDLSSLEEVEGMSVRQLKEILARNFVNYSGCCEKWELVEKVNRLYKENEENQKSYGERMQLQDEEDDSLCRICMDAVIDCVLLECGHMVTCTKCGKRMSECPICRQYVVRAVHVFKS</sequence>
<gene>
    <name evidence="8" type="primary">Rnf34</name>
</gene>
<accession>Q6AYH3</accession>
<accession>Q8CIP0</accession>
<proteinExistence type="evidence at protein level"/>
<feature type="chain" id="PRO_0000056075" description="E3 ubiquitin-protein ligase RNF34">
    <location>
        <begin position="1"/>
        <end position="381"/>
    </location>
</feature>
<feature type="domain" description="SAP 1">
    <location>
        <begin position="115"/>
        <end position="134"/>
    </location>
</feature>
<feature type="domain" description="SAP 2">
    <location>
        <begin position="273"/>
        <end position="287"/>
    </location>
</feature>
<feature type="zinc finger region" description="FYVE-type">
    <location>
        <begin position="56"/>
        <end position="107"/>
    </location>
</feature>
<feature type="zinc finger region" description="RING-type" evidence="3">
    <location>
        <begin position="334"/>
        <end position="369"/>
    </location>
</feature>
<feature type="region of interest" description="Disordered" evidence="4">
    <location>
        <begin position="216"/>
        <end position="261"/>
    </location>
</feature>
<feature type="compositionally biased region" description="Acidic residues" evidence="4">
    <location>
        <begin position="221"/>
        <end position="249"/>
    </location>
</feature>
<feature type="site" description="Cleavage; by caspase-3" evidence="1">
    <location>
        <begin position="241"/>
        <end position="242"/>
    </location>
</feature>
<feature type="modified residue" description="Phosphoserine" evidence="1">
    <location>
        <position position="169"/>
    </location>
</feature>
<feature type="modified residue" description="Phosphoserine" evidence="1">
    <location>
        <position position="263"/>
    </location>
</feature>
<feature type="modified residue" description="Phosphoserine" evidence="2">
    <location>
        <position position="265"/>
    </location>
</feature>
<feature type="sequence conflict" description="In Ref. 1; AAN60073." evidence="7" ref="1">
    <original>P</original>
    <variation>L</variation>
    <location>
        <position position="253"/>
    </location>
</feature>
<name>RNF34_RAT</name>
<reference key="1">
    <citation type="journal article" date="2003" name="J. Neurochem.">
        <title>A palmitoylated RING finger ubiquitin ligase and its homologue in the brain membranes.</title>
        <authorList>
            <person name="Araki K."/>
            <person name="Kawamura M."/>
            <person name="Suzuki T."/>
            <person name="Matsuda N."/>
            <person name="Kanbe D."/>
            <person name="Ishii K."/>
            <person name="Ichikawa T."/>
            <person name="Kumanishi T."/>
            <person name="Chiba T."/>
            <person name="Tanaka K."/>
            <person name="Nawa H."/>
        </authorList>
    </citation>
    <scope>NUCLEOTIDE SEQUENCE [MRNA]</scope>
    <scope>FUNCTION</scope>
    <scope>SUBCELLULAR LOCATION</scope>
    <scope>AUTOUBIQUITINATION</scope>
    <scope>TISSUE SPECIFICITY</scope>
    <source>
        <tissue>Hippocampus</tissue>
    </source>
</reference>
<reference key="2">
    <citation type="journal article" date="2004" name="Genome Res.">
        <title>The status, quality, and expansion of the NIH full-length cDNA project: the Mammalian Gene Collection (MGC).</title>
        <authorList>
            <consortium name="The MGC Project Team"/>
        </authorList>
    </citation>
    <scope>NUCLEOTIDE SEQUENCE [LARGE SCALE MRNA]</scope>
    <source>
        <tissue>Testis</tissue>
    </source>
</reference>
<protein>
    <recommendedName>
        <fullName evidence="7">E3 ubiquitin-protein ligase RNF34</fullName>
        <ecNumber evidence="5">2.3.2.27</ecNumber>
    </recommendedName>
    <alternativeName>
        <fullName evidence="8">RING finger protein 34</fullName>
    </alternativeName>
    <alternativeName>
        <fullName evidence="6">RING finger protein MOMO</fullName>
    </alternativeName>
    <alternativeName>
        <fullName evidence="7">RING-type E3 ubiquitin transferase RNF34</fullName>
    </alternativeName>
</protein>